<keyword id="KW-0130">Cell adhesion</keyword>
<keyword id="KW-1217">Cell adhesion impairing toxin</keyword>
<keyword id="KW-0903">Direct protein sequencing</keyword>
<keyword id="KW-1015">Disulfide bond</keyword>
<keyword id="KW-0964">Secreted</keyword>
<keyword id="KW-0800">Toxin</keyword>
<dbReference type="SMR" id="P81630"/>
<dbReference type="GO" id="GO:0005576">
    <property type="term" value="C:extracellular region"/>
    <property type="evidence" value="ECO:0007669"/>
    <property type="project" value="UniProtKB-SubCell"/>
</dbReference>
<dbReference type="GO" id="GO:0090729">
    <property type="term" value="F:toxin activity"/>
    <property type="evidence" value="ECO:0007669"/>
    <property type="project" value="UniProtKB-KW"/>
</dbReference>
<dbReference type="GO" id="GO:0007155">
    <property type="term" value="P:cell adhesion"/>
    <property type="evidence" value="ECO:0007669"/>
    <property type="project" value="UniProtKB-KW"/>
</dbReference>
<dbReference type="Gene3D" id="4.10.70.10">
    <property type="entry name" value="Disintegrin domain"/>
    <property type="match status" value="1"/>
</dbReference>
<dbReference type="InterPro" id="IPR018358">
    <property type="entry name" value="Disintegrin_CS"/>
</dbReference>
<dbReference type="InterPro" id="IPR001762">
    <property type="entry name" value="Disintegrin_dom"/>
</dbReference>
<dbReference type="InterPro" id="IPR036436">
    <property type="entry name" value="Disintegrin_dom_sf"/>
</dbReference>
<dbReference type="PANTHER" id="PTHR11905">
    <property type="entry name" value="ADAM A DISINTEGRIN AND METALLOPROTEASE DOMAIN"/>
    <property type="match status" value="1"/>
</dbReference>
<dbReference type="PANTHER" id="PTHR11905:SF159">
    <property type="entry name" value="ADAM METALLOPROTEASE"/>
    <property type="match status" value="1"/>
</dbReference>
<dbReference type="Pfam" id="PF00200">
    <property type="entry name" value="Disintegrin"/>
    <property type="match status" value="1"/>
</dbReference>
<dbReference type="PRINTS" id="PR00289">
    <property type="entry name" value="DISINTEGRIN"/>
</dbReference>
<dbReference type="SMART" id="SM00050">
    <property type="entry name" value="DISIN"/>
    <property type="match status" value="1"/>
</dbReference>
<dbReference type="SUPFAM" id="SSF57552">
    <property type="entry name" value="Blood coagulation inhibitor (disintegrin)"/>
    <property type="match status" value="1"/>
</dbReference>
<dbReference type="PROSITE" id="PS00427">
    <property type="entry name" value="DISINTEGRIN_1"/>
    <property type="match status" value="1"/>
</dbReference>
<dbReference type="PROSITE" id="PS50214">
    <property type="entry name" value="DISINTEGRIN_2"/>
    <property type="match status" value="1"/>
</dbReference>
<comment type="function">
    <text evidence="3">Inhibits adhesion of cells expressing alpha-4/beta-1 (ITGA4/ITGB1) and alpha-4/beta-7 (ITGA4/ITGB7) integrins to the natural ligands vascular cell adhesion molecule 1 (VCAM-1) and mucosal addressin cell adhesion molecule 1 (MADCAM-1). It is also a weaker inhibitor of alpha-5/beta-1 (ITGA5/ITGB1) and alpha-2b/beta-3 (ITGA2B/ITGB3) integrins. The inhibitory activity of EC3 towards alpha-4 integrins is associated with the MLD sequence of EC3B subunit. The ability of EC3 to inhibit ITGA5/ITGB1 resides in both subunits A and B.</text>
</comment>
<comment type="subunit">
    <text evidence="3">Heterodimer with EC3B; disulfide-linked.</text>
</comment>
<comment type="subcellular location">
    <subcellularLocation>
        <location evidence="3">Secreted</location>
    </subcellularLocation>
</comment>
<comment type="tissue specificity">
    <text evidence="6">Expressed by the venom gland.</text>
</comment>
<comment type="miscellaneous">
    <text evidence="6">Negative results: does not inhibit alpha-V/beta-3 (ITGAV/ITGB3) integrin.</text>
</comment>
<comment type="miscellaneous">
    <text>The disintegrin belongs to the dimeric disintegrin subfamily.</text>
</comment>
<comment type="similarity">
    <text evidence="5">Belongs to the venom metalloproteinase (M12B) family. P-II subfamily. P-IIe sub-subfamily.</text>
</comment>
<evidence type="ECO:0000250" key="1">
    <source>
        <dbReference type="UniProtKB" id="Q805F6"/>
    </source>
</evidence>
<evidence type="ECO:0000255" key="2">
    <source>
        <dbReference type="PROSITE-ProRule" id="PRU00068"/>
    </source>
</evidence>
<evidence type="ECO:0000269" key="3">
    <source>
    </source>
</evidence>
<evidence type="ECO:0000303" key="4">
    <source>
    </source>
</evidence>
<evidence type="ECO:0000305" key="5"/>
<evidence type="ECO:0000305" key="6">
    <source>
    </source>
</evidence>
<name>VM23A_ECHCA</name>
<proteinExistence type="evidence at protein level"/>
<reference key="1">
    <citation type="journal article" date="1999" name="J. Biol. Chem.">
        <title>EC3, a novel heterodimeric disintegrin from Echis carinatus venom, inhibits alpha4 and alpha5 integrins in an RGD-independent manner.</title>
        <authorList>
            <person name="Marcinkiewicz C."/>
            <person name="Calvete J.J."/>
            <person name="Marcinkiewicz M.M."/>
            <person name="Raida M."/>
            <person name="Vijay-Kumar S."/>
            <person name="Huang Z."/>
            <person name="Lobb R.R."/>
            <person name="Niewiarowski S."/>
        </authorList>
    </citation>
    <scope>PROTEIN SEQUENCE</scope>
    <scope>FUNCTION</scope>
    <scope>SUBUNIT</scope>
    <scope>SUBCELLULAR LOCATION</scope>
    <source>
        <tissue>Venom</tissue>
    </source>
</reference>
<protein>
    <recommendedName>
        <fullName evidence="4">Disintegrin EC3A</fullName>
    </recommendedName>
</protein>
<sequence length="67" mass="7440">NSVHPCCDPVKCEPREGEHCISGPCCRNCYFLRAGTVCKRAVGDDVDDYCSGITPDCPRNRYKGKED</sequence>
<feature type="chain" id="PRO_0000101798" description="Disintegrin EC3A" evidence="3">
    <location>
        <begin position="1"/>
        <end position="67"/>
    </location>
</feature>
<feature type="domain" description="Disintegrin" evidence="2">
    <location>
        <begin position="1"/>
        <end position="65"/>
    </location>
</feature>
<feature type="short sequence motif" description="Cell attachment site; atypical (VGD)">
    <location>
        <begin position="42"/>
        <end position="44"/>
    </location>
</feature>
<feature type="disulfide bond" evidence="1">
    <location>
        <begin position="6"/>
        <end position="29"/>
    </location>
</feature>
<feature type="disulfide bond" description="Interchain (with C-12 in EC3B)" evidence="1">
    <location>
        <position position="7"/>
    </location>
</feature>
<feature type="disulfide bond" description="Interchain (with C-7 in EC3B)" evidence="1">
    <location>
        <position position="12"/>
    </location>
</feature>
<feature type="disulfide bond" evidence="1">
    <location>
        <begin position="20"/>
        <end position="26"/>
    </location>
</feature>
<feature type="disulfide bond" evidence="1">
    <location>
        <begin position="25"/>
        <end position="50"/>
    </location>
</feature>
<feature type="disulfide bond" evidence="1 2">
    <location>
        <begin position="38"/>
        <end position="57"/>
    </location>
</feature>
<feature type="sequence variant">
    <original>R</original>
    <variation>N</variation>
    <location>
        <position position="33"/>
    </location>
</feature>
<feature type="sequence variant">
    <original>V</original>
    <variation>I</variation>
    <location>
        <position position="37"/>
    </location>
</feature>
<organism>
    <name type="scientific">Echis carinatus</name>
    <name type="common">Saw-scaled viper</name>
    <dbReference type="NCBI Taxonomy" id="40353"/>
    <lineage>
        <taxon>Eukaryota</taxon>
        <taxon>Metazoa</taxon>
        <taxon>Chordata</taxon>
        <taxon>Craniata</taxon>
        <taxon>Vertebrata</taxon>
        <taxon>Euteleostomi</taxon>
        <taxon>Lepidosauria</taxon>
        <taxon>Squamata</taxon>
        <taxon>Bifurcata</taxon>
        <taxon>Unidentata</taxon>
        <taxon>Episquamata</taxon>
        <taxon>Toxicofera</taxon>
        <taxon>Serpentes</taxon>
        <taxon>Colubroidea</taxon>
        <taxon>Viperidae</taxon>
        <taxon>Viperinae</taxon>
        <taxon>Echis</taxon>
    </lineage>
</organism>
<accession>P81630</accession>